<dbReference type="EMBL" id="AP009384">
    <property type="protein sequence ID" value="BAF87853.1"/>
    <property type="molecule type" value="Genomic_DNA"/>
</dbReference>
<dbReference type="RefSeq" id="WP_012170383.1">
    <property type="nucleotide sequence ID" value="NC_009937.1"/>
</dbReference>
<dbReference type="SMR" id="A8I2D3"/>
<dbReference type="STRING" id="438753.AZC_1855"/>
<dbReference type="KEGG" id="azc:AZC_1855"/>
<dbReference type="eggNOG" id="COG0267">
    <property type="taxonomic scope" value="Bacteria"/>
</dbReference>
<dbReference type="HOGENOM" id="CLU_190949_1_1_5"/>
<dbReference type="Proteomes" id="UP000000270">
    <property type="component" value="Chromosome"/>
</dbReference>
<dbReference type="GO" id="GO:0022625">
    <property type="term" value="C:cytosolic large ribosomal subunit"/>
    <property type="evidence" value="ECO:0007669"/>
    <property type="project" value="TreeGrafter"/>
</dbReference>
<dbReference type="GO" id="GO:0003735">
    <property type="term" value="F:structural constituent of ribosome"/>
    <property type="evidence" value="ECO:0007669"/>
    <property type="project" value="InterPro"/>
</dbReference>
<dbReference type="GO" id="GO:0006412">
    <property type="term" value="P:translation"/>
    <property type="evidence" value="ECO:0007669"/>
    <property type="project" value="UniProtKB-UniRule"/>
</dbReference>
<dbReference type="Gene3D" id="2.20.28.120">
    <property type="entry name" value="Ribosomal protein L33"/>
    <property type="match status" value="1"/>
</dbReference>
<dbReference type="HAMAP" id="MF_00294">
    <property type="entry name" value="Ribosomal_bL33"/>
    <property type="match status" value="1"/>
</dbReference>
<dbReference type="InterPro" id="IPR001705">
    <property type="entry name" value="Ribosomal_bL33"/>
</dbReference>
<dbReference type="InterPro" id="IPR018264">
    <property type="entry name" value="Ribosomal_bL33_CS"/>
</dbReference>
<dbReference type="InterPro" id="IPR038584">
    <property type="entry name" value="Ribosomal_bL33_sf"/>
</dbReference>
<dbReference type="InterPro" id="IPR011332">
    <property type="entry name" value="Ribosomal_zn-bd"/>
</dbReference>
<dbReference type="NCBIfam" id="NF001860">
    <property type="entry name" value="PRK00595.1"/>
    <property type="match status" value="1"/>
</dbReference>
<dbReference type="NCBIfam" id="TIGR01023">
    <property type="entry name" value="rpmG_bact"/>
    <property type="match status" value="1"/>
</dbReference>
<dbReference type="PANTHER" id="PTHR15238">
    <property type="entry name" value="54S RIBOSOMAL PROTEIN L39, MITOCHONDRIAL"/>
    <property type="match status" value="1"/>
</dbReference>
<dbReference type="PANTHER" id="PTHR15238:SF1">
    <property type="entry name" value="LARGE RIBOSOMAL SUBUNIT PROTEIN BL33M"/>
    <property type="match status" value="1"/>
</dbReference>
<dbReference type="Pfam" id="PF00471">
    <property type="entry name" value="Ribosomal_L33"/>
    <property type="match status" value="1"/>
</dbReference>
<dbReference type="SUPFAM" id="SSF57829">
    <property type="entry name" value="Zn-binding ribosomal proteins"/>
    <property type="match status" value="1"/>
</dbReference>
<dbReference type="PROSITE" id="PS00582">
    <property type="entry name" value="RIBOSOMAL_L33"/>
    <property type="match status" value="1"/>
</dbReference>
<gene>
    <name evidence="1" type="primary">rpmG</name>
    <name type="ordered locus">AZC_1855</name>
</gene>
<name>RL33_AZOC5</name>
<feature type="chain" id="PRO_1000071955" description="Large ribosomal subunit protein bL33">
    <location>
        <begin position="1"/>
        <end position="55"/>
    </location>
</feature>
<organism>
    <name type="scientific">Azorhizobium caulinodans (strain ATCC 43989 / DSM 5975 / JCM 20966 / LMG 6465 / NBRC 14845 / NCIMB 13405 / ORS 571)</name>
    <dbReference type="NCBI Taxonomy" id="438753"/>
    <lineage>
        <taxon>Bacteria</taxon>
        <taxon>Pseudomonadati</taxon>
        <taxon>Pseudomonadota</taxon>
        <taxon>Alphaproteobacteria</taxon>
        <taxon>Hyphomicrobiales</taxon>
        <taxon>Xanthobacteraceae</taxon>
        <taxon>Azorhizobium</taxon>
    </lineage>
</organism>
<proteinExistence type="inferred from homology"/>
<keyword id="KW-1185">Reference proteome</keyword>
<keyword id="KW-0687">Ribonucleoprotein</keyword>
<keyword id="KW-0689">Ribosomal protein</keyword>
<sequence length="55" mass="6297">MAKAATIKIKLLSSADTGVFYVTKKNSRTKTDKIVLKKYDPVARKHVEFRETKIK</sequence>
<reference key="1">
    <citation type="submission" date="2007-04" db="EMBL/GenBank/DDBJ databases">
        <title>Complete genome sequence of the nitrogen-fixing bacterium Azorhizobium caulinodans ORS571.</title>
        <authorList>
            <person name="Lee K.B."/>
            <person name="Backer P.D."/>
            <person name="Aono T."/>
            <person name="Liu C.T."/>
            <person name="Suzuki S."/>
            <person name="Suzuki T."/>
            <person name="Kaneko T."/>
            <person name="Yamada M."/>
            <person name="Tabata S."/>
            <person name="Kupfer D.M."/>
            <person name="Najar F.Z."/>
            <person name="Wiley G.B."/>
            <person name="Roe B."/>
            <person name="Binnewies T."/>
            <person name="Ussery D."/>
            <person name="Vereecke D."/>
            <person name="Gevers D."/>
            <person name="Holsters M."/>
            <person name="Oyaizu H."/>
        </authorList>
    </citation>
    <scope>NUCLEOTIDE SEQUENCE [LARGE SCALE GENOMIC DNA]</scope>
    <source>
        <strain>ATCC 43989 / DSM 5975 / JCM 20966 / LMG 6465 / NBRC 14845 / NCIMB 13405 / ORS 571</strain>
    </source>
</reference>
<evidence type="ECO:0000255" key="1">
    <source>
        <dbReference type="HAMAP-Rule" id="MF_00294"/>
    </source>
</evidence>
<evidence type="ECO:0000305" key="2"/>
<comment type="similarity">
    <text evidence="1">Belongs to the bacterial ribosomal protein bL33 family.</text>
</comment>
<accession>A8I2D3</accession>
<protein>
    <recommendedName>
        <fullName evidence="1">Large ribosomal subunit protein bL33</fullName>
    </recommendedName>
    <alternativeName>
        <fullName evidence="2">50S ribosomal protein L33</fullName>
    </alternativeName>
</protein>